<evidence type="ECO:0000255" key="1">
    <source>
        <dbReference type="HAMAP-Rule" id="MF_01181"/>
    </source>
</evidence>
<proteinExistence type="inferred from homology"/>
<comment type="function">
    <text evidence="1">Binds RpoD and negatively regulates RpoD-mediated transcription activation by preventing the interaction between the primary sigma factor RpoD with the catalytic core of the RNA polymerase and with promoter DNA. May be involved in replacement of the RNA polymerase sigma subunit from RpoD to RpoS during the transition from exponential growth to the stationary phase.</text>
</comment>
<comment type="subunit">
    <text evidence="1">Interacts with RpoD.</text>
</comment>
<comment type="subcellular location">
    <subcellularLocation>
        <location evidence="1">Cytoplasm</location>
    </subcellularLocation>
</comment>
<comment type="similarity">
    <text evidence="1">Belongs to the Rsd/AlgQ family.</text>
</comment>
<keyword id="KW-0963">Cytoplasm</keyword>
<keyword id="KW-0804">Transcription</keyword>
<keyword id="KW-0805">Transcription regulation</keyword>
<dbReference type="EMBL" id="AP009240">
    <property type="protein sequence ID" value="BAG79807.1"/>
    <property type="molecule type" value="Genomic_DNA"/>
</dbReference>
<dbReference type="RefSeq" id="WP_000934302.1">
    <property type="nucleotide sequence ID" value="NC_011415.1"/>
</dbReference>
<dbReference type="SMR" id="B6I5K6"/>
<dbReference type="GeneID" id="75205513"/>
<dbReference type="KEGG" id="ecy:ECSE_4283"/>
<dbReference type="HOGENOM" id="CLU_142729_0_0_6"/>
<dbReference type="Proteomes" id="UP000008199">
    <property type="component" value="Chromosome"/>
</dbReference>
<dbReference type="GO" id="GO:0005737">
    <property type="term" value="C:cytoplasm"/>
    <property type="evidence" value="ECO:0007669"/>
    <property type="project" value="UniProtKB-SubCell"/>
</dbReference>
<dbReference type="GO" id="GO:0006355">
    <property type="term" value="P:regulation of DNA-templated transcription"/>
    <property type="evidence" value="ECO:0007669"/>
    <property type="project" value="InterPro"/>
</dbReference>
<dbReference type="FunFam" id="1.20.120.1370:FF:000001">
    <property type="entry name" value="Regulator of sigma D"/>
    <property type="match status" value="1"/>
</dbReference>
<dbReference type="Gene3D" id="1.20.120.1370">
    <property type="entry name" value="Regulator of RNA polymerase sigma(70) subunit, domain 4"/>
    <property type="match status" value="1"/>
</dbReference>
<dbReference type="HAMAP" id="MF_01181">
    <property type="entry name" value="Rsd"/>
    <property type="match status" value="1"/>
</dbReference>
<dbReference type="InterPro" id="IPR038309">
    <property type="entry name" value="Rsd/AlgQ_sf"/>
</dbReference>
<dbReference type="InterPro" id="IPR023785">
    <property type="entry name" value="Sigma70_reg_Rsd"/>
</dbReference>
<dbReference type="InterPro" id="IPR007448">
    <property type="entry name" value="Sigma70_reg_Rsd_AlgQ"/>
</dbReference>
<dbReference type="NCBIfam" id="NF008723">
    <property type="entry name" value="PRK11718.1"/>
    <property type="match status" value="1"/>
</dbReference>
<dbReference type="Pfam" id="PF04353">
    <property type="entry name" value="Rsd_AlgQ"/>
    <property type="match status" value="1"/>
</dbReference>
<dbReference type="PIRSF" id="PIRSF016548">
    <property type="entry name" value="Rsd_AlgQ"/>
    <property type="match status" value="1"/>
</dbReference>
<organism>
    <name type="scientific">Escherichia coli (strain SE11)</name>
    <dbReference type="NCBI Taxonomy" id="409438"/>
    <lineage>
        <taxon>Bacteria</taxon>
        <taxon>Pseudomonadati</taxon>
        <taxon>Pseudomonadota</taxon>
        <taxon>Gammaproteobacteria</taxon>
        <taxon>Enterobacterales</taxon>
        <taxon>Enterobacteriaceae</taxon>
        <taxon>Escherichia</taxon>
    </lineage>
</organism>
<name>RSD_ECOSE</name>
<protein>
    <recommendedName>
        <fullName evidence="1">Regulator of sigma D</fullName>
    </recommendedName>
</protein>
<accession>B6I5K6</accession>
<reference key="1">
    <citation type="journal article" date="2008" name="DNA Res.">
        <title>Complete genome sequence and comparative analysis of the wild-type commensal Escherichia coli strain SE11 isolated from a healthy adult.</title>
        <authorList>
            <person name="Oshima K."/>
            <person name="Toh H."/>
            <person name="Ogura Y."/>
            <person name="Sasamoto H."/>
            <person name="Morita H."/>
            <person name="Park S.-H."/>
            <person name="Ooka T."/>
            <person name="Iyoda S."/>
            <person name="Taylor T.D."/>
            <person name="Hayashi T."/>
            <person name="Itoh K."/>
            <person name="Hattori M."/>
        </authorList>
    </citation>
    <scope>NUCLEOTIDE SEQUENCE [LARGE SCALE GENOMIC DNA]</scope>
    <source>
        <strain>SE11</strain>
    </source>
</reference>
<sequence>MLNQLDNLTERVRGSNKLVDRWLHVRKHLLVAYYNLVGIKPGKESYMRLNEKALDDFCQSLVDYLSAGHFSIYERILHKLEGNGQLARAAKIWPQLEANTQQIMDYYDSSLETAIDHDNYLEFQQVLSDIGEALEARFVLEDKLILLVLDAARVKHPA</sequence>
<feature type="chain" id="PRO_1000138194" description="Regulator of sigma D">
    <location>
        <begin position="1"/>
        <end position="158"/>
    </location>
</feature>
<gene>
    <name evidence="1" type="primary">rsd</name>
    <name type="ordered locus">ECSE_4283</name>
</gene>